<proteinExistence type="inferred from homology"/>
<feature type="chain" id="PRO_0000384011" description="Lactate utilization protein C">
    <location>
        <begin position="1"/>
        <end position="240"/>
    </location>
</feature>
<comment type="function">
    <text evidence="1">Is involved in L-lactate degradation and allows cells to grow with lactate as the sole carbon source.</text>
</comment>
<comment type="similarity">
    <text evidence="1">Belongs to the LutC/YkgG family.</text>
</comment>
<protein>
    <recommendedName>
        <fullName evidence="1">Lactate utilization protein C</fullName>
    </recommendedName>
</protein>
<accession>Q5L302</accession>
<reference key="1">
    <citation type="journal article" date="2004" name="Nucleic Acids Res.">
        <title>Thermoadaptation trait revealed by the genome sequence of thermophilic Geobacillus kaustophilus.</title>
        <authorList>
            <person name="Takami H."/>
            <person name="Takaki Y."/>
            <person name="Chee G.-J."/>
            <person name="Nishi S."/>
            <person name="Shimamura S."/>
            <person name="Suzuki H."/>
            <person name="Matsui S."/>
            <person name="Uchiyama I."/>
        </authorList>
    </citation>
    <scope>NUCLEOTIDE SEQUENCE [LARGE SCALE GENOMIC DNA]</scope>
    <source>
        <strain>HTA426</strain>
    </source>
</reference>
<dbReference type="EMBL" id="BA000043">
    <property type="protein sequence ID" value="BAD74678.1"/>
    <property type="molecule type" value="Genomic_DNA"/>
</dbReference>
<dbReference type="RefSeq" id="WP_011229897.1">
    <property type="nucleotide sequence ID" value="NC_006510.1"/>
</dbReference>
<dbReference type="SMR" id="Q5L302"/>
<dbReference type="STRING" id="235909.GK0393"/>
<dbReference type="KEGG" id="gka:GK0393"/>
<dbReference type="PATRIC" id="fig|235909.7.peg.464"/>
<dbReference type="eggNOG" id="COG1556">
    <property type="taxonomic scope" value="Bacteria"/>
</dbReference>
<dbReference type="HOGENOM" id="CLU_090664_1_0_9"/>
<dbReference type="Proteomes" id="UP000001172">
    <property type="component" value="Chromosome"/>
</dbReference>
<dbReference type="GO" id="GO:0006089">
    <property type="term" value="P:lactate metabolic process"/>
    <property type="evidence" value="ECO:0007669"/>
    <property type="project" value="UniProtKB-UniRule"/>
</dbReference>
<dbReference type="Gene3D" id="3.40.50.10420">
    <property type="entry name" value="NagB/RpiA/CoA transferase-like"/>
    <property type="match status" value="1"/>
</dbReference>
<dbReference type="HAMAP" id="MF_02104">
    <property type="entry name" value="LutC"/>
    <property type="match status" value="1"/>
</dbReference>
<dbReference type="InterPro" id="IPR024185">
    <property type="entry name" value="FTHF_cligase-like_sf"/>
</dbReference>
<dbReference type="InterPro" id="IPR003741">
    <property type="entry name" value="LUD_dom"/>
</dbReference>
<dbReference type="InterPro" id="IPR022823">
    <property type="entry name" value="LutC"/>
</dbReference>
<dbReference type="InterPro" id="IPR037171">
    <property type="entry name" value="NagB/RpiA_transferase-like"/>
</dbReference>
<dbReference type="PANTHER" id="PTHR43682">
    <property type="entry name" value="LACTATE UTILIZATION PROTEIN C"/>
    <property type="match status" value="1"/>
</dbReference>
<dbReference type="PANTHER" id="PTHR43682:SF1">
    <property type="entry name" value="LACTATE UTILIZATION PROTEIN C"/>
    <property type="match status" value="1"/>
</dbReference>
<dbReference type="Pfam" id="PF02589">
    <property type="entry name" value="LUD_dom"/>
    <property type="match status" value="1"/>
</dbReference>
<dbReference type="SUPFAM" id="SSF100950">
    <property type="entry name" value="NagB/RpiA/CoA transferase-like"/>
    <property type="match status" value="1"/>
</dbReference>
<organism>
    <name type="scientific">Geobacillus kaustophilus (strain HTA426)</name>
    <dbReference type="NCBI Taxonomy" id="235909"/>
    <lineage>
        <taxon>Bacteria</taxon>
        <taxon>Bacillati</taxon>
        <taxon>Bacillota</taxon>
        <taxon>Bacilli</taxon>
        <taxon>Bacillales</taxon>
        <taxon>Anoxybacillaceae</taxon>
        <taxon>Geobacillus</taxon>
        <taxon>Geobacillus thermoleovorans group</taxon>
    </lineage>
</organism>
<sequence>MTRGAIHNRDAFLEHIAHRLGRAPRLSGVSRPQWSNQPQWKVLAGYSQDDLLNVLQKQCGLIHTDYIETTSAELAGALRRQVAAYGGGPVIVPDDPRFAEYGLSALLRDEWPAEQTTVHIWNPALGRQNIDAAEQANVGIAFSDITLAESGTVVLFSRNEQGRAIHFLPKTYIAIVPKSTVVPRMTQAAAVIHEQIEKGGLVPSCINFITGPSNSADIEMNLVVGVHGPMKAAYIVVTDR</sequence>
<evidence type="ECO:0000255" key="1">
    <source>
        <dbReference type="HAMAP-Rule" id="MF_02104"/>
    </source>
</evidence>
<gene>
    <name evidence="1" type="primary">lutC</name>
    <name type="ordered locus">GK0393</name>
</gene>
<name>LUTC_GEOKA</name>
<keyword id="KW-1185">Reference proteome</keyword>